<accession>O26607</accession>
<organism>
    <name type="scientific">Methanothermobacter thermautotrophicus (strain ATCC 29096 / DSM 1053 / JCM 10044 / NBRC 100330 / Delta H)</name>
    <name type="common">Methanobacterium thermoautotrophicum</name>
    <dbReference type="NCBI Taxonomy" id="187420"/>
    <lineage>
        <taxon>Archaea</taxon>
        <taxon>Methanobacteriati</taxon>
        <taxon>Methanobacteriota</taxon>
        <taxon>Methanomada group</taxon>
        <taxon>Methanobacteria</taxon>
        <taxon>Methanobacteriales</taxon>
        <taxon>Methanobacteriaceae</taxon>
        <taxon>Methanothermobacter</taxon>
    </lineage>
</organism>
<name>Y507_METTH</name>
<reference key="1">
    <citation type="journal article" date="1997" name="J. Bacteriol.">
        <title>Complete genome sequence of Methanobacterium thermoautotrophicum deltaH: functional analysis and comparative genomics.</title>
        <authorList>
            <person name="Smith D.R."/>
            <person name="Doucette-Stamm L.A."/>
            <person name="Deloughery C."/>
            <person name="Lee H.-M."/>
            <person name="Dubois J."/>
            <person name="Aldredge T."/>
            <person name="Bashirzadeh R."/>
            <person name="Blakely D."/>
            <person name="Cook R."/>
            <person name="Gilbert K."/>
            <person name="Harrison D."/>
            <person name="Hoang L."/>
            <person name="Keagle P."/>
            <person name="Lumm W."/>
            <person name="Pothier B."/>
            <person name="Qiu D."/>
            <person name="Spadafora R."/>
            <person name="Vicare R."/>
            <person name="Wang Y."/>
            <person name="Wierzbowski J."/>
            <person name="Gibson R."/>
            <person name="Jiwani N."/>
            <person name="Caruso A."/>
            <person name="Bush D."/>
            <person name="Safer H."/>
            <person name="Patwell D."/>
            <person name="Prabhakar S."/>
            <person name="McDougall S."/>
            <person name="Shimer G."/>
            <person name="Goyal A."/>
            <person name="Pietrovski S."/>
            <person name="Church G.M."/>
            <person name="Daniels C.J."/>
            <person name="Mao J.-I."/>
            <person name="Rice P."/>
            <person name="Noelling J."/>
            <person name="Reeve J.N."/>
        </authorList>
    </citation>
    <scope>NUCLEOTIDE SEQUENCE [LARGE SCALE GENOMIC DNA]</scope>
    <source>
        <strain>ATCC 29096 / DSM 1053 / JCM 10044 / NBRC 100330 / Delta H</strain>
    </source>
</reference>
<feature type="chain" id="PRO_0000138496" description="UPF0145 protein MTH_507">
    <location>
        <begin position="1"/>
        <end position="110"/>
    </location>
</feature>
<comment type="similarity">
    <text evidence="1">Belongs to the UPF0145 family.</text>
</comment>
<comment type="sequence caution" evidence="1">
    <conflict type="frameshift">
        <sequence resource="EMBL-CDS" id="AAB85013"/>
    </conflict>
</comment>
<proteinExistence type="inferred from homology"/>
<evidence type="ECO:0000305" key="1"/>
<keyword id="KW-1185">Reference proteome</keyword>
<protein>
    <recommendedName>
        <fullName>UPF0145 protein MTH_507</fullName>
    </recommendedName>
</protein>
<sequence>MLMLTSQTIDGKRISRYHGIVTGDALIGANIYKDIFSGVRDVVGGRTSAYERELARARELALSSMASAAERLGADAIIGVRLDYHNLGGTMGNTILVSTTGTAVSTEDEE</sequence>
<dbReference type="EMBL" id="AE000666">
    <property type="protein sequence ID" value="AAB85013.1"/>
    <property type="status" value="ALT_FRAME"/>
    <property type="molecule type" value="Genomic_DNA"/>
</dbReference>
<dbReference type="PIR" id="G69166">
    <property type="entry name" value="G69166"/>
</dbReference>
<dbReference type="SMR" id="O26607"/>
<dbReference type="PaxDb" id="187420-MTH_507"/>
<dbReference type="EnsemblBacteria" id="AAB85013">
    <property type="protein sequence ID" value="AAB85013"/>
    <property type="gene ID" value="MTH_507"/>
</dbReference>
<dbReference type="KEGG" id="mth:MTH_507"/>
<dbReference type="PATRIC" id="fig|187420.15.peg.485"/>
<dbReference type="HOGENOM" id="CLU_117144_3_0_2"/>
<dbReference type="InParanoid" id="O26607"/>
<dbReference type="Proteomes" id="UP000005223">
    <property type="component" value="Chromosome"/>
</dbReference>
<dbReference type="Gene3D" id="3.30.110.70">
    <property type="entry name" value="Hypothetical protein apc22750. Chain B"/>
    <property type="match status" value="1"/>
</dbReference>
<dbReference type="HAMAP" id="MF_00338">
    <property type="entry name" value="UPF0145"/>
    <property type="match status" value="1"/>
</dbReference>
<dbReference type="InterPro" id="IPR035439">
    <property type="entry name" value="UPF0145_dom_sf"/>
</dbReference>
<dbReference type="InterPro" id="IPR002765">
    <property type="entry name" value="UPF0145_YbjQ-like"/>
</dbReference>
<dbReference type="PANTHER" id="PTHR34068">
    <property type="entry name" value="UPF0145 PROTEIN YBJQ"/>
    <property type="match status" value="1"/>
</dbReference>
<dbReference type="PANTHER" id="PTHR34068:SF1">
    <property type="entry name" value="UPF0145 PROTEIN YBJQ"/>
    <property type="match status" value="1"/>
</dbReference>
<dbReference type="Pfam" id="PF01906">
    <property type="entry name" value="YbjQ_1"/>
    <property type="match status" value="1"/>
</dbReference>
<dbReference type="SUPFAM" id="SSF117782">
    <property type="entry name" value="YbjQ-like"/>
    <property type="match status" value="1"/>
</dbReference>
<gene>
    <name type="ordered locus">MTH_507</name>
</gene>